<keyword id="KW-0963">Cytoplasm</keyword>
<keyword id="KW-0488">Methylation</keyword>
<keyword id="KW-0648">Protein biosynthesis</keyword>
<keyword id="KW-1185">Reference proteome</keyword>
<accession>Q3A928</accession>
<comment type="function">
    <text evidence="1">Peptide chain release factor 1 directs the termination of translation in response to the peptide chain termination codons UAG and UAA.</text>
</comment>
<comment type="subcellular location">
    <subcellularLocation>
        <location evidence="1">Cytoplasm</location>
    </subcellularLocation>
</comment>
<comment type="PTM">
    <text evidence="1">Methylated by PrmC. Methylation increases the termination efficiency of RF1.</text>
</comment>
<comment type="similarity">
    <text evidence="1">Belongs to the prokaryotic/mitochondrial release factor family.</text>
</comment>
<dbReference type="EMBL" id="CP000141">
    <property type="protein sequence ID" value="ABB15088.1"/>
    <property type="molecule type" value="Genomic_DNA"/>
</dbReference>
<dbReference type="RefSeq" id="WP_011345429.1">
    <property type="nucleotide sequence ID" value="NC_007503.1"/>
</dbReference>
<dbReference type="SMR" id="Q3A928"/>
<dbReference type="FunCoup" id="Q3A928">
    <property type="interactions" value="393"/>
</dbReference>
<dbReference type="STRING" id="246194.CHY_2563"/>
<dbReference type="KEGG" id="chy:CHY_2563"/>
<dbReference type="eggNOG" id="COG0216">
    <property type="taxonomic scope" value="Bacteria"/>
</dbReference>
<dbReference type="HOGENOM" id="CLU_036856_0_1_9"/>
<dbReference type="InParanoid" id="Q3A928"/>
<dbReference type="OrthoDB" id="9806673at2"/>
<dbReference type="Proteomes" id="UP000002706">
    <property type="component" value="Chromosome"/>
</dbReference>
<dbReference type="GO" id="GO:0005737">
    <property type="term" value="C:cytoplasm"/>
    <property type="evidence" value="ECO:0007669"/>
    <property type="project" value="UniProtKB-SubCell"/>
</dbReference>
<dbReference type="GO" id="GO:0016149">
    <property type="term" value="F:translation release factor activity, codon specific"/>
    <property type="evidence" value="ECO:0007669"/>
    <property type="project" value="UniProtKB-UniRule"/>
</dbReference>
<dbReference type="FunFam" id="3.30.160.20:FF:000004">
    <property type="entry name" value="Peptide chain release factor 1"/>
    <property type="match status" value="1"/>
</dbReference>
<dbReference type="FunFam" id="3.30.70.1660:FF:000002">
    <property type="entry name" value="Peptide chain release factor 1"/>
    <property type="match status" value="1"/>
</dbReference>
<dbReference type="FunFam" id="3.30.70.1660:FF:000004">
    <property type="entry name" value="Peptide chain release factor 1"/>
    <property type="match status" value="1"/>
</dbReference>
<dbReference type="Gene3D" id="3.30.160.20">
    <property type="match status" value="1"/>
</dbReference>
<dbReference type="Gene3D" id="3.30.70.1660">
    <property type="match status" value="1"/>
</dbReference>
<dbReference type="Gene3D" id="6.10.140.1950">
    <property type="match status" value="1"/>
</dbReference>
<dbReference type="HAMAP" id="MF_00093">
    <property type="entry name" value="Rel_fac_1"/>
    <property type="match status" value="1"/>
</dbReference>
<dbReference type="InterPro" id="IPR005139">
    <property type="entry name" value="PCRF"/>
</dbReference>
<dbReference type="InterPro" id="IPR000352">
    <property type="entry name" value="Pep_chain_release_fac_I"/>
</dbReference>
<dbReference type="InterPro" id="IPR045853">
    <property type="entry name" value="Pep_chain_release_fac_I_sf"/>
</dbReference>
<dbReference type="InterPro" id="IPR050057">
    <property type="entry name" value="Prokaryotic/Mito_RF"/>
</dbReference>
<dbReference type="InterPro" id="IPR004373">
    <property type="entry name" value="RF-1"/>
</dbReference>
<dbReference type="NCBIfam" id="TIGR00019">
    <property type="entry name" value="prfA"/>
    <property type="match status" value="1"/>
</dbReference>
<dbReference type="NCBIfam" id="NF001859">
    <property type="entry name" value="PRK00591.1"/>
    <property type="match status" value="1"/>
</dbReference>
<dbReference type="PANTHER" id="PTHR43804">
    <property type="entry name" value="LD18447P"/>
    <property type="match status" value="1"/>
</dbReference>
<dbReference type="PANTHER" id="PTHR43804:SF7">
    <property type="entry name" value="LD18447P"/>
    <property type="match status" value="1"/>
</dbReference>
<dbReference type="Pfam" id="PF03462">
    <property type="entry name" value="PCRF"/>
    <property type="match status" value="1"/>
</dbReference>
<dbReference type="Pfam" id="PF00472">
    <property type="entry name" value="RF-1"/>
    <property type="match status" value="1"/>
</dbReference>
<dbReference type="SMART" id="SM00937">
    <property type="entry name" value="PCRF"/>
    <property type="match status" value="1"/>
</dbReference>
<dbReference type="SUPFAM" id="SSF75620">
    <property type="entry name" value="Release factor"/>
    <property type="match status" value="1"/>
</dbReference>
<evidence type="ECO:0000255" key="1">
    <source>
        <dbReference type="HAMAP-Rule" id="MF_00093"/>
    </source>
</evidence>
<evidence type="ECO:0000256" key="2">
    <source>
        <dbReference type="SAM" id="MobiDB-lite"/>
    </source>
</evidence>
<sequence length="358" mass="40781">MFDKLDQLEEKYEELSRLISDPEVIADTQRWQGYVKAHAEIEEIVQVYREYKKTVKEIEDAERMLDEKLDPDFRELVQSELHDLKERREELEAKLKILLLPKDPNDEKNVIMEIRAGAGGEEAALFAGDLFRMYSKYADRMGWKVEIMDSHPTDLGGFKEVIFTIEGKGVYSRMKFESGVHRVQRVPTTESGGRIHTSTATVAVLPEAEEVEVEINPNDLRIDVFCASGAGGQHVNKTESAVRITHIPTGIVVTCQDEKSQHKNKERAMKILRARLLDKARQEQEAELASARKSQVGTGDRSERIRTYNFPQNRVTDHRIGLTLHRLDAVLEGDLDEIIDALITTDQAERLKQVDGNA</sequence>
<gene>
    <name evidence="1" type="primary">prfA</name>
    <name type="ordered locus">CHY_2563</name>
</gene>
<proteinExistence type="inferred from homology"/>
<protein>
    <recommendedName>
        <fullName evidence="1">Peptide chain release factor 1</fullName>
        <shortName evidence="1">RF-1</shortName>
    </recommendedName>
</protein>
<organism>
    <name type="scientific">Carboxydothermus hydrogenoformans (strain ATCC BAA-161 / DSM 6008 / Z-2901)</name>
    <dbReference type="NCBI Taxonomy" id="246194"/>
    <lineage>
        <taxon>Bacteria</taxon>
        <taxon>Bacillati</taxon>
        <taxon>Bacillota</taxon>
        <taxon>Clostridia</taxon>
        <taxon>Thermoanaerobacterales</taxon>
        <taxon>Thermoanaerobacteraceae</taxon>
        <taxon>Carboxydothermus</taxon>
    </lineage>
</organism>
<name>RF1_CARHZ</name>
<feature type="chain" id="PRO_0000263249" description="Peptide chain release factor 1">
    <location>
        <begin position="1"/>
        <end position="358"/>
    </location>
</feature>
<feature type="region of interest" description="Disordered" evidence="2">
    <location>
        <begin position="286"/>
        <end position="309"/>
    </location>
</feature>
<feature type="modified residue" description="N5-methylglutamine" evidence="1">
    <location>
        <position position="233"/>
    </location>
</feature>
<reference key="1">
    <citation type="journal article" date="2005" name="PLoS Genet.">
        <title>Life in hot carbon monoxide: the complete genome sequence of Carboxydothermus hydrogenoformans Z-2901.</title>
        <authorList>
            <person name="Wu M."/>
            <person name="Ren Q."/>
            <person name="Durkin A.S."/>
            <person name="Daugherty S.C."/>
            <person name="Brinkac L.M."/>
            <person name="Dodson R.J."/>
            <person name="Madupu R."/>
            <person name="Sullivan S.A."/>
            <person name="Kolonay J.F."/>
            <person name="Nelson W.C."/>
            <person name="Tallon L.J."/>
            <person name="Jones K.M."/>
            <person name="Ulrich L.E."/>
            <person name="Gonzalez J.M."/>
            <person name="Zhulin I.B."/>
            <person name="Robb F.T."/>
            <person name="Eisen J.A."/>
        </authorList>
    </citation>
    <scope>NUCLEOTIDE SEQUENCE [LARGE SCALE GENOMIC DNA]</scope>
    <source>
        <strain>ATCC BAA-161 / DSM 6008 / Z-2901</strain>
    </source>
</reference>